<gene>
    <name evidence="7" type="primary">HPCA</name>
    <name type="synonym">BDR2</name>
</gene>
<comment type="function">
    <text evidence="1 4">Calcium-binding protein that may play a role in the regulation of voltage-dependent calcium channels (PubMed:28398555). May also play a role in cyclic-nucleotide-mediated signaling through the regulation of adenylate and guanylate cyclases (By similarity).</text>
</comment>
<comment type="subunit">
    <text evidence="4">Oligomer; oligomerization is calcium-dependent (PubMed:28398555). May interact with the voltage-dependent P/Q- and N-type calcium channels CACNA1A and CACNA1B (PubMed:28398555).</text>
</comment>
<comment type="interaction">
    <interactant intactId="EBI-12197079">
        <id>P84074</id>
    </interactant>
    <interactant intactId="EBI-2817707">
        <id>Q9BXJ5</id>
        <label>C1QTNF2</label>
    </interactant>
    <organismsDiffer>false</organismsDiffer>
    <experiments>6</experiments>
</comment>
<comment type="interaction">
    <interactant intactId="EBI-12197079">
        <id>P84074</id>
    </interactant>
    <interactant intactId="EBI-1050662">
        <id>P12532</id>
        <label>CKMT1B</label>
    </interactant>
    <organismsDiffer>false</organismsDiffer>
    <experiments>3</experiments>
</comment>
<comment type="interaction">
    <interactant intactId="EBI-12197079">
        <id>P84074</id>
    </interactant>
    <interactant intactId="EBI-12884642">
        <id>Q03060-25</id>
        <label>CREM</label>
    </interactant>
    <organismsDiffer>false</organismsDiffer>
    <experiments>6</experiments>
</comment>
<comment type="interaction">
    <interactant intactId="EBI-12197079">
        <id>P84074</id>
    </interactant>
    <interactant intactId="EBI-740376">
        <id>Q86UW9</id>
        <label>DTX2</label>
    </interactant>
    <organismsDiffer>false</organismsDiffer>
    <experiments>5</experiments>
</comment>
<comment type="interaction">
    <interactant intactId="EBI-12197079">
        <id>P84074</id>
    </interactant>
    <interactant intactId="EBI-12132270">
        <id>Q9BWX5</id>
        <label>GATA5</label>
    </interactant>
    <organismsDiffer>false</organismsDiffer>
    <experiments>3</experiments>
</comment>
<comment type="interaction">
    <interactant intactId="EBI-12197079">
        <id>P84074</id>
    </interactant>
    <interactant intactId="EBI-465156">
        <id>Q9UBH0</id>
        <label>IL36RN</label>
    </interactant>
    <organismsDiffer>false</organismsDiffer>
    <experiments>3</experiments>
</comment>
<comment type="interaction">
    <interactant intactId="EBI-12197079">
        <id>P84074</id>
    </interactant>
    <interactant intactId="EBI-12853322">
        <id>P55197-2</id>
        <label>MLLT10</label>
    </interactant>
    <organismsDiffer>false</organismsDiffer>
    <experiments>3</experiments>
</comment>
<comment type="interaction">
    <interactant intactId="EBI-12197079">
        <id>P84074</id>
    </interactant>
    <interactant intactId="EBI-718622">
        <id>Q969H8</id>
        <label>MYDGF</label>
    </interactant>
    <organismsDiffer>false</organismsDiffer>
    <experiments>6</experiments>
</comment>
<comment type="interaction">
    <interactant intactId="EBI-12197079">
        <id>P84074</id>
    </interactant>
    <interactant intactId="EBI-11986293">
        <id>P0CG20</id>
        <label>PRR35</label>
    </interactant>
    <organismsDiffer>false</organismsDiffer>
    <experiments>3</experiments>
</comment>
<comment type="interaction">
    <interactant intactId="EBI-12197079">
        <id>P84074</id>
    </interactant>
    <interactant intactId="EBI-7600166">
        <id>O15427</id>
        <label>SLC16A3</label>
    </interactant>
    <organismsDiffer>false</organismsDiffer>
    <experiments>5</experiments>
</comment>
<comment type="interaction">
    <interactant intactId="EBI-12197079">
        <id>P84074</id>
    </interactant>
    <interactant intactId="EBI-11139477">
        <id>Q96N21</id>
        <label>TEPSIN</label>
    </interactant>
    <organismsDiffer>false</organismsDiffer>
    <experiments>3</experiments>
</comment>
<comment type="interaction">
    <interactant intactId="EBI-12197079">
        <id>P84074</id>
    </interactant>
    <interactant intactId="EBI-743128">
        <id>P14927</id>
        <label>UQCRB</label>
    </interactant>
    <organismsDiffer>false</organismsDiffer>
    <experiments>3</experiments>
</comment>
<comment type="interaction">
    <interactant intactId="EBI-12197079">
        <id>P84074</id>
    </interactant>
    <interactant intactId="EBI-11957238">
        <id>Q2TAL6</id>
        <label>VWC2</label>
    </interactant>
    <organismsDiffer>false</organismsDiffer>
    <experiments>3</experiments>
</comment>
<comment type="subcellular location">
    <subcellularLocation>
        <location evidence="1 4">Cytoplasm</location>
        <location evidence="1 4">Cytosol</location>
    </subcellularLocation>
    <subcellularLocation>
        <location evidence="1">Membrane</location>
        <topology evidence="1">Peripheral membrane protein</topology>
    </subcellularLocation>
    <text evidence="1 4">Association with membranes is calcium-dependent (By similarity). Enriched in the perinuclear region, probably at the trans Golgi network in response to calcium (PubMed:28398555).</text>
</comment>
<comment type="tissue specificity">
    <text evidence="5">Brain specific.</text>
</comment>
<comment type="domain">
    <text evidence="4">Binds 3 calcium via EF-hand domains. The cryptic EF-hand 1 does not bind calcium.</text>
</comment>
<comment type="PTM">
    <text evidence="1">Myristoylation facilitates association with membranes.</text>
</comment>
<comment type="disease" evidence="3 4">
    <disease id="DI-04436">
        <name>Dystonia 2, torsion, autosomal recessive</name>
        <acronym>DYT2</acronym>
        <description>A form of torsion dystonia, a disease defined by the presence of sustained involuntary muscle contractions, often leading to abnormal postures. 'Torsion' refers to the twisting nature of body movements, often affecting the trunk. DYT2 is a slowly progressive form that first affects distal limbs and later involves the neck, orofacial, and craniocervical regions.</description>
        <dbReference type="MIM" id="224500"/>
    </disease>
    <text>The disease is caused by variants affecting the gene represented in this entry.</text>
</comment>
<comment type="similarity">
    <text evidence="6">Belongs to the recoverin family.</text>
</comment>
<sequence>MGKQNSKLRPEMLQDLRENTEFSELELQEWYKGFLKDCPTGILNVDEFKKIYANFFPYGDASKFAEHVFRTFDTNSDGTIDFREFIIALSVTSRGRLEQKLMWAFSMYDLDGNGYISREEMLEIVQAIYKMVSSVMKMPEDESTPEKRTEKIFRQMDTNNDGKLSLEEFIRGAKSDPSIVRLLQCDPSSASQF</sequence>
<accession>P84074</accession>
<accession>B2R9T3</accession>
<accession>D3DPQ7</accession>
<accession>P32076</accession>
<accession>P41211</accession>
<accession>P70510</accession>
<keyword id="KW-0002">3D-structure</keyword>
<keyword id="KW-0106">Calcium</keyword>
<keyword id="KW-0963">Cytoplasm</keyword>
<keyword id="KW-0225">Disease variant</keyword>
<keyword id="KW-1023">Dystonia</keyword>
<keyword id="KW-0449">Lipoprotein</keyword>
<keyword id="KW-0472">Membrane</keyword>
<keyword id="KW-0479">Metal-binding</keyword>
<keyword id="KW-0519">Myristate</keyword>
<keyword id="KW-1267">Proteomics identification</keyword>
<keyword id="KW-1185">Reference proteome</keyword>
<keyword id="KW-0677">Repeat</keyword>
<name>HPCA_HUMAN</name>
<protein>
    <recommendedName>
        <fullName evidence="6">Neuron-specific calcium-binding protein hippocalcin</fullName>
    </recommendedName>
    <alternativeName>
        <fullName>Calcium-binding protein BDR-2</fullName>
    </alternativeName>
</protein>
<evidence type="ECO:0000250" key="1">
    <source>
        <dbReference type="UniProtKB" id="P84076"/>
    </source>
</evidence>
<evidence type="ECO:0000255" key="2">
    <source>
        <dbReference type="PROSITE-ProRule" id="PRU00448"/>
    </source>
</evidence>
<evidence type="ECO:0000269" key="3">
    <source>
    </source>
</evidence>
<evidence type="ECO:0000269" key="4">
    <source>
    </source>
</evidence>
<evidence type="ECO:0000269" key="5">
    <source>
    </source>
</evidence>
<evidence type="ECO:0000305" key="6"/>
<evidence type="ECO:0000312" key="7">
    <source>
        <dbReference type="HGNC" id="HGNC:5144"/>
    </source>
</evidence>
<evidence type="ECO:0007744" key="8">
    <source>
        <dbReference type="PDB" id="5G4P"/>
    </source>
</evidence>
<evidence type="ECO:0007744" key="9">
    <source>
        <dbReference type="PDB" id="5G58"/>
    </source>
</evidence>
<evidence type="ECO:0007744" key="10">
    <source>
        <dbReference type="PDB" id="5M6C"/>
    </source>
</evidence>
<evidence type="ECO:0007829" key="11">
    <source>
        <dbReference type="PDB" id="5G4P"/>
    </source>
</evidence>
<dbReference type="EMBL" id="D16593">
    <property type="protein sequence ID" value="BAA04019.1"/>
    <property type="molecule type" value="mRNA"/>
</dbReference>
<dbReference type="EMBL" id="AB015202">
    <property type="protein sequence ID" value="BAA74456.1"/>
    <property type="molecule type" value="Genomic_DNA"/>
</dbReference>
<dbReference type="EMBL" id="AK313907">
    <property type="protein sequence ID" value="BAG36630.1"/>
    <property type="molecule type" value="mRNA"/>
</dbReference>
<dbReference type="EMBL" id="CH471059">
    <property type="protein sequence ID" value="EAX07495.1"/>
    <property type="molecule type" value="Genomic_DNA"/>
</dbReference>
<dbReference type="EMBL" id="CH471059">
    <property type="protein sequence ID" value="EAX07496.1"/>
    <property type="molecule type" value="Genomic_DNA"/>
</dbReference>
<dbReference type="EMBL" id="CH471059">
    <property type="protein sequence ID" value="EAX07498.1"/>
    <property type="molecule type" value="Genomic_DNA"/>
</dbReference>
<dbReference type="EMBL" id="BC001777">
    <property type="protein sequence ID" value="AAH01777.1"/>
    <property type="molecule type" value="mRNA"/>
</dbReference>
<dbReference type="CCDS" id="CCDS370.1"/>
<dbReference type="PIR" id="JC2186">
    <property type="entry name" value="JC2186"/>
</dbReference>
<dbReference type="RefSeq" id="NP_002134.2">
    <property type="nucleotide sequence ID" value="NM_002143.2"/>
</dbReference>
<dbReference type="RefSeq" id="XP_005270849.1">
    <property type="nucleotide sequence ID" value="XM_005270792.4"/>
</dbReference>
<dbReference type="RefSeq" id="XP_016856607.1">
    <property type="nucleotide sequence ID" value="XM_017001118.3"/>
</dbReference>
<dbReference type="RefSeq" id="XP_054192201.1">
    <property type="nucleotide sequence ID" value="XM_054336226.1"/>
</dbReference>
<dbReference type="RefSeq" id="XP_054192202.1">
    <property type="nucleotide sequence ID" value="XM_054336227.1"/>
</dbReference>
<dbReference type="PDB" id="5G4P">
    <property type="method" value="X-ray"/>
    <property type="resolution" value="2.42 A"/>
    <property type="chains" value="A/E=1-193"/>
</dbReference>
<dbReference type="PDB" id="5G58">
    <property type="method" value="X-ray"/>
    <property type="resolution" value="2.54 A"/>
    <property type="chains" value="A/E=1-193"/>
</dbReference>
<dbReference type="PDB" id="5M6C">
    <property type="method" value="X-ray"/>
    <property type="resolution" value="3.00 A"/>
    <property type="chains" value="A/E=1-193"/>
</dbReference>
<dbReference type="PDB" id="7OWM">
    <property type="method" value="X-ray"/>
    <property type="resolution" value="1.50 A"/>
    <property type="chains" value="C=2-9"/>
</dbReference>
<dbReference type="PDBsum" id="5G4P"/>
<dbReference type="PDBsum" id="5G58"/>
<dbReference type="PDBsum" id="5M6C"/>
<dbReference type="PDBsum" id="7OWM"/>
<dbReference type="SMR" id="P84074"/>
<dbReference type="BioGRID" id="109448">
    <property type="interactions" value="43"/>
</dbReference>
<dbReference type="FunCoup" id="P84074">
    <property type="interactions" value="607"/>
</dbReference>
<dbReference type="IntAct" id="P84074">
    <property type="interactions" value="33"/>
</dbReference>
<dbReference type="STRING" id="9606.ENSP00000362566"/>
<dbReference type="TCDB" id="8.A.82.2.8">
    <property type="family name" value="the calmodulin calcium binding protein (calmodulin) family"/>
</dbReference>
<dbReference type="GlyGen" id="P84074">
    <property type="glycosylation" value="1 site, 1 O-linked glycan (1 site)"/>
</dbReference>
<dbReference type="iPTMnet" id="P84074"/>
<dbReference type="PhosphoSitePlus" id="P84074"/>
<dbReference type="SwissPalm" id="P84074"/>
<dbReference type="BioMuta" id="HPCA"/>
<dbReference type="DMDM" id="51317406"/>
<dbReference type="jPOST" id="P84074"/>
<dbReference type="MassIVE" id="P84074"/>
<dbReference type="PaxDb" id="9606-ENSP00000362566"/>
<dbReference type="PeptideAtlas" id="P84074"/>
<dbReference type="ProteomicsDB" id="57746"/>
<dbReference type="Pumba" id="P84074"/>
<dbReference type="Antibodypedia" id="31374">
    <property type="antibodies" value="99 antibodies from 22 providers"/>
</dbReference>
<dbReference type="DNASU" id="3208"/>
<dbReference type="Ensembl" id="ENST00000373467.4">
    <property type="protein sequence ID" value="ENSP00000362566.3"/>
    <property type="gene ID" value="ENSG00000121905.10"/>
</dbReference>
<dbReference type="GeneID" id="3208"/>
<dbReference type="KEGG" id="hsa:3208"/>
<dbReference type="MANE-Select" id="ENST00000373467.4">
    <property type="protein sequence ID" value="ENSP00000362566.3"/>
    <property type="RefSeq nucleotide sequence ID" value="NM_002143.3"/>
    <property type="RefSeq protein sequence ID" value="NP_002134.2"/>
</dbReference>
<dbReference type="UCSC" id="uc001bwh.4">
    <property type="organism name" value="human"/>
</dbReference>
<dbReference type="AGR" id="HGNC:5144"/>
<dbReference type="CTD" id="3208"/>
<dbReference type="DisGeNET" id="3208"/>
<dbReference type="GeneCards" id="HPCA"/>
<dbReference type="HGNC" id="HGNC:5144">
    <property type="gene designation" value="HPCA"/>
</dbReference>
<dbReference type="HPA" id="ENSG00000121905">
    <property type="expression patterns" value="Tissue enriched (brain)"/>
</dbReference>
<dbReference type="MalaCards" id="HPCA"/>
<dbReference type="MIM" id="142622">
    <property type="type" value="gene"/>
</dbReference>
<dbReference type="MIM" id="224500">
    <property type="type" value="phenotype"/>
</dbReference>
<dbReference type="neXtProt" id="NX_P84074"/>
<dbReference type="OpenTargets" id="ENSG00000121905"/>
<dbReference type="Orphanet" id="99657">
    <property type="disease" value="Primary dystonia, DYT2 type"/>
</dbReference>
<dbReference type="PharmGKB" id="PA29417"/>
<dbReference type="VEuPathDB" id="HostDB:ENSG00000121905"/>
<dbReference type="eggNOG" id="KOG0044">
    <property type="taxonomic scope" value="Eukaryota"/>
</dbReference>
<dbReference type="GeneTree" id="ENSGT00940000158110"/>
<dbReference type="HOGENOM" id="CLU_072366_1_0_1"/>
<dbReference type="InParanoid" id="P84074"/>
<dbReference type="OMA" id="QMYDPAR"/>
<dbReference type="OrthoDB" id="191686at2759"/>
<dbReference type="PAN-GO" id="P84074">
    <property type="GO annotations" value="1 GO annotation based on evolutionary models"/>
</dbReference>
<dbReference type="PhylomeDB" id="P84074"/>
<dbReference type="TreeFam" id="TF300009"/>
<dbReference type="PathwayCommons" id="P84074"/>
<dbReference type="SignaLink" id="P84074"/>
<dbReference type="BioGRID-ORCS" id="3208">
    <property type="hits" value="14 hits in 1145 CRISPR screens"/>
</dbReference>
<dbReference type="CD-CODE" id="FB4E32DD">
    <property type="entry name" value="Presynaptic clusters and postsynaptic densities"/>
</dbReference>
<dbReference type="ChiTaRS" id="HPCA">
    <property type="organism name" value="human"/>
</dbReference>
<dbReference type="GeneWiki" id="Hippocalcin"/>
<dbReference type="GenomeRNAi" id="3208"/>
<dbReference type="Pharos" id="P84074">
    <property type="development level" value="Tbio"/>
</dbReference>
<dbReference type="PRO" id="PR:P84074"/>
<dbReference type="Proteomes" id="UP000005640">
    <property type="component" value="Chromosome 1"/>
</dbReference>
<dbReference type="RNAct" id="P84074">
    <property type="molecule type" value="protein"/>
</dbReference>
<dbReference type="Bgee" id="ENSG00000121905">
    <property type="expression patterns" value="Expressed in caudate nucleus and 150 other cell types or tissues"/>
</dbReference>
<dbReference type="GO" id="GO:0030424">
    <property type="term" value="C:axon"/>
    <property type="evidence" value="ECO:0007669"/>
    <property type="project" value="Ensembl"/>
</dbReference>
<dbReference type="GO" id="GO:0005737">
    <property type="term" value="C:cytoplasm"/>
    <property type="evidence" value="ECO:0000314"/>
    <property type="project" value="UniProtKB"/>
</dbReference>
<dbReference type="GO" id="GO:0005829">
    <property type="term" value="C:cytosol"/>
    <property type="evidence" value="ECO:0000250"/>
    <property type="project" value="UniProtKB"/>
</dbReference>
<dbReference type="GO" id="GO:0032839">
    <property type="term" value="C:dendrite cytoplasm"/>
    <property type="evidence" value="ECO:0007669"/>
    <property type="project" value="Ensembl"/>
</dbReference>
<dbReference type="GO" id="GO:0032590">
    <property type="term" value="C:dendrite membrane"/>
    <property type="evidence" value="ECO:0007669"/>
    <property type="project" value="Ensembl"/>
</dbReference>
<dbReference type="GO" id="GO:0044327">
    <property type="term" value="C:dendritic spine head"/>
    <property type="evidence" value="ECO:0007669"/>
    <property type="project" value="Ensembl"/>
</dbReference>
<dbReference type="GO" id="GO:0098978">
    <property type="term" value="C:glutamatergic synapse"/>
    <property type="evidence" value="ECO:0007669"/>
    <property type="project" value="Ensembl"/>
</dbReference>
<dbReference type="GO" id="GO:0016020">
    <property type="term" value="C:membrane"/>
    <property type="evidence" value="ECO:0000250"/>
    <property type="project" value="UniProtKB"/>
</dbReference>
<dbReference type="GO" id="GO:0032809">
    <property type="term" value="C:neuronal cell body membrane"/>
    <property type="evidence" value="ECO:0007669"/>
    <property type="project" value="Ensembl"/>
</dbReference>
<dbReference type="GO" id="GO:0043204">
    <property type="term" value="C:perikaryon"/>
    <property type="evidence" value="ECO:0007669"/>
    <property type="project" value="Ensembl"/>
</dbReference>
<dbReference type="GO" id="GO:0003779">
    <property type="term" value="F:actin binding"/>
    <property type="evidence" value="ECO:0000314"/>
    <property type="project" value="UniProtKB"/>
</dbReference>
<dbReference type="GO" id="GO:0005509">
    <property type="term" value="F:calcium ion binding"/>
    <property type="evidence" value="ECO:0000314"/>
    <property type="project" value="UniProtKB"/>
</dbReference>
<dbReference type="GO" id="GO:0042802">
    <property type="term" value="F:identical protein binding"/>
    <property type="evidence" value="ECO:0000314"/>
    <property type="project" value="UniProtKB"/>
</dbReference>
<dbReference type="GO" id="GO:0019900">
    <property type="term" value="F:kinase binding"/>
    <property type="evidence" value="ECO:0007669"/>
    <property type="project" value="Ensembl"/>
</dbReference>
<dbReference type="GO" id="GO:0019722">
    <property type="term" value="P:calcium-mediated signaling"/>
    <property type="evidence" value="ECO:0007669"/>
    <property type="project" value="Ensembl"/>
</dbReference>
<dbReference type="GO" id="GO:0071277">
    <property type="term" value="P:cellular response to calcium ion"/>
    <property type="evidence" value="ECO:0000315"/>
    <property type="project" value="UniProtKB"/>
</dbReference>
<dbReference type="GO" id="GO:0071257">
    <property type="term" value="P:cellular response to electrical stimulus"/>
    <property type="evidence" value="ECO:0007669"/>
    <property type="project" value="Ensembl"/>
</dbReference>
<dbReference type="GO" id="GO:1905232">
    <property type="term" value="P:cellular response to L-glutamate"/>
    <property type="evidence" value="ECO:0007669"/>
    <property type="project" value="Ensembl"/>
</dbReference>
<dbReference type="GO" id="GO:0048839">
    <property type="term" value="P:inner ear development"/>
    <property type="evidence" value="ECO:0007669"/>
    <property type="project" value="Ensembl"/>
</dbReference>
<dbReference type="GO" id="GO:0090314">
    <property type="term" value="P:positive regulation of protein targeting to membrane"/>
    <property type="evidence" value="ECO:0007669"/>
    <property type="project" value="Ensembl"/>
</dbReference>
<dbReference type="GO" id="GO:0099149">
    <property type="term" value="P:regulation of postsynaptic neurotransmitter receptor internalization"/>
    <property type="evidence" value="ECO:0007669"/>
    <property type="project" value="Ensembl"/>
</dbReference>
<dbReference type="GO" id="GO:0009966">
    <property type="term" value="P:regulation of signal transduction"/>
    <property type="evidence" value="ECO:0000318"/>
    <property type="project" value="GO_Central"/>
</dbReference>
<dbReference type="GO" id="GO:1901385">
    <property type="term" value="P:regulation of voltage-gated calcium channel activity"/>
    <property type="evidence" value="ECO:0000315"/>
    <property type="project" value="UniProtKB"/>
</dbReference>
<dbReference type="GO" id="GO:1904010">
    <property type="term" value="P:response to Aroclor 1254"/>
    <property type="evidence" value="ECO:0007669"/>
    <property type="project" value="Ensembl"/>
</dbReference>
<dbReference type="GO" id="GO:1901986">
    <property type="term" value="P:response to ketamine"/>
    <property type="evidence" value="ECO:0007669"/>
    <property type="project" value="Ensembl"/>
</dbReference>
<dbReference type="GO" id="GO:0060041">
    <property type="term" value="P:retina development in camera-type eye"/>
    <property type="evidence" value="ECO:0007669"/>
    <property type="project" value="Ensembl"/>
</dbReference>
<dbReference type="CDD" id="cd00051">
    <property type="entry name" value="EFh"/>
    <property type="match status" value="2"/>
</dbReference>
<dbReference type="FunFam" id="1.10.238.10:FF:000078">
    <property type="entry name" value="Hippocalcin-like 1"/>
    <property type="match status" value="1"/>
</dbReference>
<dbReference type="FunFam" id="1.10.238.10:FF:000072">
    <property type="entry name" value="Hippocalcin-like protein 1"/>
    <property type="match status" value="1"/>
</dbReference>
<dbReference type="Gene3D" id="1.10.238.10">
    <property type="entry name" value="EF-hand"/>
    <property type="match status" value="1"/>
</dbReference>
<dbReference type="InterPro" id="IPR011992">
    <property type="entry name" value="EF-hand-dom_pair"/>
</dbReference>
<dbReference type="InterPro" id="IPR018247">
    <property type="entry name" value="EF_Hand_1_Ca_BS"/>
</dbReference>
<dbReference type="InterPro" id="IPR002048">
    <property type="entry name" value="EF_hand_dom"/>
</dbReference>
<dbReference type="InterPro" id="IPR028846">
    <property type="entry name" value="Recoverin"/>
</dbReference>
<dbReference type="PANTHER" id="PTHR23055">
    <property type="entry name" value="CALCIUM BINDING PROTEINS"/>
    <property type="match status" value="1"/>
</dbReference>
<dbReference type="PANTHER" id="PTHR23055:SF57">
    <property type="entry name" value="NEURON-SPECIFIC CALCIUM-BINDING PROTEIN HIPPOCALCIN"/>
    <property type="match status" value="1"/>
</dbReference>
<dbReference type="Pfam" id="PF00036">
    <property type="entry name" value="EF-hand_1"/>
    <property type="match status" value="1"/>
</dbReference>
<dbReference type="Pfam" id="PF13499">
    <property type="entry name" value="EF-hand_7"/>
    <property type="match status" value="1"/>
</dbReference>
<dbReference type="PRINTS" id="PR00450">
    <property type="entry name" value="RECOVERIN"/>
</dbReference>
<dbReference type="SMART" id="SM00054">
    <property type="entry name" value="EFh"/>
    <property type="match status" value="3"/>
</dbReference>
<dbReference type="SUPFAM" id="SSF47473">
    <property type="entry name" value="EF-hand"/>
    <property type="match status" value="1"/>
</dbReference>
<dbReference type="PROSITE" id="PS00018">
    <property type="entry name" value="EF_HAND_1"/>
    <property type="match status" value="3"/>
</dbReference>
<dbReference type="PROSITE" id="PS50222">
    <property type="entry name" value="EF_HAND_2"/>
    <property type="match status" value="3"/>
</dbReference>
<reference key="1">
    <citation type="journal article" date="1994" name="Biochem. Biophys. Res. Commun.">
        <title>Molecular cloning of human hippocalcin cDNA and chromosomal mapping of its gene.</title>
        <authorList>
            <person name="Takamatsu K."/>
            <person name="Kobayashi M."/>
            <person name="Saitoh S."/>
            <person name="Fujishiro M."/>
            <person name="Noguchi T."/>
        </authorList>
    </citation>
    <scope>NUCLEOTIDE SEQUENCE [MRNA]</scope>
    <scope>TISSUE SPECIFICITY</scope>
    <source>
        <tissue>Hippocampus</tissue>
    </source>
</reference>
<reference key="2">
    <citation type="journal article" date="1998" name="Gene">
        <title>Genomic structure and chromosomal mapping of the human and mouse hippocalcin genes.</title>
        <authorList>
            <person name="Masaki T."/>
            <person name="Sakai E."/>
            <person name="Furuta Y."/>
            <person name="Kobayashi M."/>
            <person name="Takamatsu K."/>
        </authorList>
    </citation>
    <scope>NUCLEOTIDE SEQUENCE [GENOMIC DNA]</scope>
</reference>
<reference key="3">
    <citation type="journal article" date="2004" name="Nat. Genet.">
        <title>Complete sequencing and characterization of 21,243 full-length human cDNAs.</title>
        <authorList>
            <person name="Ota T."/>
            <person name="Suzuki Y."/>
            <person name="Nishikawa T."/>
            <person name="Otsuki T."/>
            <person name="Sugiyama T."/>
            <person name="Irie R."/>
            <person name="Wakamatsu A."/>
            <person name="Hayashi K."/>
            <person name="Sato H."/>
            <person name="Nagai K."/>
            <person name="Kimura K."/>
            <person name="Makita H."/>
            <person name="Sekine M."/>
            <person name="Obayashi M."/>
            <person name="Nishi T."/>
            <person name="Shibahara T."/>
            <person name="Tanaka T."/>
            <person name="Ishii S."/>
            <person name="Yamamoto J."/>
            <person name="Saito K."/>
            <person name="Kawai Y."/>
            <person name="Isono Y."/>
            <person name="Nakamura Y."/>
            <person name="Nagahari K."/>
            <person name="Murakami K."/>
            <person name="Yasuda T."/>
            <person name="Iwayanagi T."/>
            <person name="Wagatsuma M."/>
            <person name="Shiratori A."/>
            <person name="Sudo H."/>
            <person name="Hosoiri T."/>
            <person name="Kaku Y."/>
            <person name="Kodaira H."/>
            <person name="Kondo H."/>
            <person name="Sugawara M."/>
            <person name="Takahashi M."/>
            <person name="Kanda K."/>
            <person name="Yokoi T."/>
            <person name="Furuya T."/>
            <person name="Kikkawa E."/>
            <person name="Omura Y."/>
            <person name="Abe K."/>
            <person name="Kamihara K."/>
            <person name="Katsuta N."/>
            <person name="Sato K."/>
            <person name="Tanikawa M."/>
            <person name="Yamazaki M."/>
            <person name="Ninomiya K."/>
            <person name="Ishibashi T."/>
            <person name="Yamashita H."/>
            <person name="Murakawa K."/>
            <person name="Fujimori K."/>
            <person name="Tanai H."/>
            <person name="Kimata M."/>
            <person name="Watanabe M."/>
            <person name="Hiraoka S."/>
            <person name="Chiba Y."/>
            <person name="Ishida S."/>
            <person name="Ono Y."/>
            <person name="Takiguchi S."/>
            <person name="Watanabe S."/>
            <person name="Yosida M."/>
            <person name="Hotuta T."/>
            <person name="Kusano J."/>
            <person name="Kanehori K."/>
            <person name="Takahashi-Fujii A."/>
            <person name="Hara H."/>
            <person name="Tanase T.-O."/>
            <person name="Nomura Y."/>
            <person name="Togiya S."/>
            <person name="Komai F."/>
            <person name="Hara R."/>
            <person name="Takeuchi K."/>
            <person name="Arita M."/>
            <person name="Imose N."/>
            <person name="Musashino K."/>
            <person name="Yuuki H."/>
            <person name="Oshima A."/>
            <person name="Sasaki N."/>
            <person name="Aotsuka S."/>
            <person name="Yoshikawa Y."/>
            <person name="Matsunawa H."/>
            <person name="Ichihara T."/>
            <person name="Shiohata N."/>
            <person name="Sano S."/>
            <person name="Moriya S."/>
            <person name="Momiyama H."/>
            <person name="Satoh N."/>
            <person name="Takami S."/>
            <person name="Terashima Y."/>
            <person name="Suzuki O."/>
            <person name="Nakagawa S."/>
            <person name="Senoh A."/>
            <person name="Mizoguchi H."/>
            <person name="Goto Y."/>
            <person name="Shimizu F."/>
            <person name="Wakebe H."/>
            <person name="Hishigaki H."/>
            <person name="Watanabe T."/>
            <person name="Sugiyama A."/>
            <person name="Takemoto M."/>
            <person name="Kawakami B."/>
            <person name="Yamazaki M."/>
            <person name="Watanabe K."/>
            <person name="Kumagai A."/>
            <person name="Itakura S."/>
            <person name="Fukuzumi Y."/>
            <person name="Fujimori Y."/>
            <person name="Komiyama M."/>
            <person name="Tashiro H."/>
            <person name="Tanigami A."/>
            <person name="Fujiwara T."/>
            <person name="Ono T."/>
            <person name="Yamada K."/>
            <person name="Fujii Y."/>
            <person name="Ozaki K."/>
            <person name="Hirao M."/>
            <person name="Ohmori Y."/>
            <person name="Kawabata A."/>
            <person name="Hikiji T."/>
            <person name="Kobatake N."/>
            <person name="Inagaki H."/>
            <person name="Ikema Y."/>
            <person name="Okamoto S."/>
            <person name="Okitani R."/>
            <person name="Kawakami T."/>
            <person name="Noguchi S."/>
            <person name="Itoh T."/>
            <person name="Shigeta K."/>
            <person name="Senba T."/>
            <person name="Matsumura K."/>
            <person name="Nakajima Y."/>
            <person name="Mizuno T."/>
            <person name="Morinaga M."/>
            <person name="Sasaki M."/>
            <person name="Togashi T."/>
            <person name="Oyama M."/>
            <person name="Hata H."/>
            <person name="Watanabe M."/>
            <person name="Komatsu T."/>
            <person name="Mizushima-Sugano J."/>
            <person name="Satoh T."/>
            <person name="Shirai Y."/>
            <person name="Takahashi Y."/>
            <person name="Nakagawa K."/>
            <person name="Okumura K."/>
            <person name="Nagase T."/>
            <person name="Nomura N."/>
            <person name="Kikuchi H."/>
            <person name="Masuho Y."/>
            <person name="Yamashita R."/>
            <person name="Nakai K."/>
            <person name="Yada T."/>
            <person name="Nakamura Y."/>
            <person name="Ohara O."/>
            <person name="Isogai T."/>
            <person name="Sugano S."/>
        </authorList>
    </citation>
    <scope>NUCLEOTIDE SEQUENCE [LARGE SCALE MRNA]</scope>
    <source>
        <tissue>Hippocampus</tissue>
    </source>
</reference>
<reference key="4">
    <citation type="submission" date="2005-09" db="EMBL/GenBank/DDBJ databases">
        <authorList>
            <person name="Mural R.J."/>
            <person name="Istrail S."/>
            <person name="Sutton G.G."/>
            <person name="Florea L."/>
            <person name="Halpern A.L."/>
            <person name="Mobarry C.M."/>
            <person name="Lippert R."/>
            <person name="Walenz B."/>
            <person name="Shatkay H."/>
            <person name="Dew I."/>
            <person name="Miller J.R."/>
            <person name="Flanigan M.J."/>
            <person name="Edwards N.J."/>
            <person name="Bolanos R."/>
            <person name="Fasulo D."/>
            <person name="Halldorsson B.V."/>
            <person name="Hannenhalli S."/>
            <person name="Turner R."/>
            <person name="Yooseph S."/>
            <person name="Lu F."/>
            <person name="Nusskern D.R."/>
            <person name="Shue B.C."/>
            <person name="Zheng X.H."/>
            <person name="Zhong F."/>
            <person name="Delcher A.L."/>
            <person name="Huson D.H."/>
            <person name="Kravitz S.A."/>
            <person name="Mouchard L."/>
            <person name="Reinert K."/>
            <person name="Remington K.A."/>
            <person name="Clark A.G."/>
            <person name="Waterman M.S."/>
            <person name="Eichler E.E."/>
            <person name="Adams M.D."/>
            <person name="Hunkapiller M.W."/>
            <person name="Myers E.W."/>
            <person name="Venter J.C."/>
        </authorList>
    </citation>
    <scope>NUCLEOTIDE SEQUENCE [LARGE SCALE GENOMIC DNA]</scope>
</reference>
<reference key="5">
    <citation type="journal article" date="2004" name="Genome Res.">
        <title>The status, quality, and expansion of the NIH full-length cDNA project: the Mammalian Gene Collection (MGC).</title>
        <authorList>
            <consortium name="The MGC Project Team"/>
        </authorList>
    </citation>
    <scope>NUCLEOTIDE SEQUENCE [LARGE SCALE MRNA]</scope>
    <source>
        <tissue>Eye</tissue>
    </source>
</reference>
<reference key="6">
    <citation type="journal article" date="2017" name="Hum. Mol. Genet.">
        <title>Biophysical and functional characterization of hippocalcin mutants responsible for human dystonia.</title>
        <authorList>
            <person name="Helassa N."/>
            <person name="Antonyuk S.V."/>
            <person name="Lian L.Y."/>
            <person name="Haynes L.P."/>
            <person name="Burgoyne R.D."/>
        </authorList>
    </citation>
    <scope>X-RAY CRYSTALLOGRAPHY (2.42 ANGSTROMS) OF WILD-TYPE AND VARIANTS DYT2 ASN-71 AND THR-190 IN COMPLEX WITH CALCIUM</scope>
    <scope>FUNCTION</scope>
    <scope>SUBUNIT</scope>
    <scope>INTERACTION WITH CACNA1A AND CACNA1B</scope>
    <scope>SUBCELLULAR LOCATION</scope>
    <scope>CHARACTERIZATION OF VARIANTS DYT2 ASN-71 AND THR-190</scope>
    <scope>DOMAIN</scope>
</reference>
<reference key="7">
    <citation type="journal article" date="2015" name="Am. J. Hum. Genet.">
        <title>Mutations in HPCA cause autosomal-recessive primary isolated dystonia.</title>
        <authorList>
            <person name="Charlesworth G."/>
            <person name="Angelova P.R."/>
            <person name="Bartolome-Robledo F."/>
            <person name="Ryten M."/>
            <person name="Trabzuni D."/>
            <person name="Stamelou M."/>
            <person name="Abramov A.Y."/>
            <person name="Bhatia K.P."/>
            <person name="Wood N.W."/>
        </authorList>
    </citation>
    <scope>INVOLVEMENT IN DYT2</scope>
    <scope>VARIANTS DYT2 ASN-71; LYS-75 AND THR-190</scope>
</reference>
<proteinExistence type="evidence at protein level"/>
<feature type="initiator methionine" description="Removed" evidence="1">
    <location>
        <position position="1"/>
    </location>
</feature>
<feature type="chain" id="PRO_0000073768" description="Neuron-specific calcium-binding protein hippocalcin">
    <location>
        <begin position="2"/>
        <end position="193"/>
    </location>
</feature>
<feature type="domain" description="EF-hand 1" evidence="6">
    <location>
        <begin position="24"/>
        <end position="59"/>
    </location>
</feature>
<feature type="domain" description="EF-hand 2" evidence="2">
    <location>
        <begin position="60"/>
        <end position="95"/>
    </location>
</feature>
<feature type="domain" description="EF-hand 3" evidence="2">
    <location>
        <begin position="96"/>
        <end position="131"/>
    </location>
</feature>
<feature type="domain" description="EF-hand 4" evidence="2">
    <location>
        <begin position="144"/>
        <end position="179"/>
    </location>
</feature>
<feature type="binding site" evidence="2 4 8 9 10">
    <location>
        <position position="73"/>
    </location>
    <ligand>
        <name>Ca(2+)</name>
        <dbReference type="ChEBI" id="CHEBI:29108"/>
        <label>1</label>
    </ligand>
</feature>
<feature type="binding site" evidence="2 4 8 9 10">
    <location>
        <position position="75"/>
    </location>
    <ligand>
        <name>Ca(2+)</name>
        <dbReference type="ChEBI" id="CHEBI:29108"/>
        <label>1</label>
    </ligand>
</feature>
<feature type="binding site" evidence="2 4 8 9 10">
    <location>
        <position position="77"/>
    </location>
    <ligand>
        <name>Ca(2+)</name>
        <dbReference type="ChEBI" id="CHEBI:29108"/>
        <label>1</label>
    </ligand>
</feature>
<feature type="binding site" evidence="2 4 8 9 10">
    <location>
        <position position="79"/>
    </location>
    <ligand>
        <name>Ca(2+)</name>
        <dbReference type="ChEBI" id="CHEBI:29108"/>
        <label>1</label>
    </ligand>
</feature>
<feature type="binding site" evidence="2 4 8 9 10">
    <location>
        <position position="84"/>
    </location>
    <ligand>
        <name>Ca(2+)</name>
        <dbReference type="ChEBI" id="CHEBI:29108"/>
        <label>1</label>
    </ligand>
</feature>
<feature type="binding site" evidence="2 4 8 9 10">
    <location>
        <position position="109"/>
    </location>
    <ligand>
        <name>Ca(2+)</name>
        <dbReference type="ChEBI" id="CHEBI:29108"/>
        <label>2</label>
    </ligand>
</feature>
<feature type="binding site" evidence="2 4 8 9 10">
    <location>
        <position position="111"/>
    </location>
    <ligand>
        <name>Ca(2+)</name>
        <dbReference type="ChEBI" id="CHEBI:29108"/>
        <label>2</label>
    </ligand>
</feature>
<feature type="binding site" evidence="2 4 8 9 10">
    <location>
        <position position="113"/>
    </location>
    <ligand>
        <name>Ca(2+)</name>
        <dbReference type="ChEBI" id="CHEBI:29108"/>
        <label>2</label>
    </ligand>
</feature>
<feature type="binding site" evidence="2 4 8 9 10">
    <location>
        <position position="115"/>
    </location>
    <ligand>
        <name>Ca(2+)</name>
        <dbReference type="ChEBI" id="CHEBI:29108"/>
        <label>2</label>
    </ligand>
</feature>
<feature type="binding site" evidence="2 4 8 9 10">
    <location>
        <position position="120"/>
    </location>
    <ligand>
        <name>Ca(2+)</name>
        <dbReference type="ChEBI" id="CHEBI:29108"/>
        <label>2</label>
    </ligand>
</feature>
<feature type="binding site" evidence="2 4 8 9 10">
    <location>
        <position position="157"/>
    </location>
    <ligand>
        <name>Ca(2+)</name>
        <dbReference type="ChEBI" id="CHEBI:29108"/>
        <label>3</label>
    </ligand>
</feature>
<feature type="binding site" evidence="2 4 8 9 10">
    <location>
        <position position="159"/>
    </location>
    <ligand>
        <name>Ca(2+)</name>
        <dbReference type="ChEBI" id="CHEBI:29108"/>
        <label>3</label>
    </ligand>
</feature>
<feature type="binding site" evidence="2 4 8 9 10">
    <location>
        <position position="161"/>
    </location>
    <ligand>
        <name>Ca(2+)</name>
        <dbReference type="ChEBI" id="CHEBI:29108"/>
        <label>3</label>
    </ligand>
</feature>
<feature type="binding site" evidence="2 4 8 9 10">
    <location>
        <position position="163"/>
    </location>
    <ligand>
        <name>Ca(2+)</name>
        <dbReference type="ChEBI" id="CHEBI:29108"/>
        <label>3</label>
    </ligand>
</feature>
<feature type="binding site" evidence="2 4 8 9 10">
    <location>
        <position position="168"/>
    </location>
    <ligand>
        <name>Ca(2+)</name>
        <dbReference type="ChEBI" id="CHEBI:29108"/>
        <label>3</label>
    </ligand>
</feature>
<feature type="lipid moiety-binding region" description="N-myristoyl glycine" evidence="1">
    <location>
        <position position="2"/>
    </location>
</feature>
<feature type="sequence variant" id="VAR_048662" description="In dbSNP:rs11554958.">
    <original>E</original>
    <variation>D</variation>
    <location>
        <position position="21"/>
    </location>
</feature>
<feature type="sequence variant" id="VAR_073803" description="In DYT2; no effect on protein localization; no effect on protein abundance; no effect on protein stability; no effect on protein 3D structure; decreased oligomerization; changed calcium-binding; effect on cooperativity for calcium-binding; no effect on affinity for calcium; no effect on interaction with voltage-dependent calcium channels; dbSNP:rs775863165." evidence="3 4">
    <original>T</original>
    <variation>N</variation>
    <location>
        <position position="71"/>
    </location>
</feature>
<feature type="sequence variant" id="VAR_073804" description="In DYT2; dbSNP:rs786205675." evidence="3">
    <original>N</original>
    <variation>K</variation>
    <location>
        <position position="75"/>
    </location>
</feature>
<feature type="sequence variant" id="VAR_073805" description="In DYT2; no effect on protein localization; no effect on protein abundance; no effect on protein stability; no effect on protein 3D structure; decreased oligomerization; no effect on calcium-binding; no effect on affinity for calcium; increased interaction with voltage-dependent calcium channels; dbSNP:rs550921485." evidence="3 4">
    <original>A</original>
    <variation>T</variation>
    <location>
        <position position="190"/>
    </location>
</feature>
<feature type="sequence conflict" description="In Ref. 1; BAA04019." evidence="6" ref="1">
    <original>R</original>
    <variation>P</variation>
    <location>
        <position position="94"/>
    </location>
</feature>
<feature type="sequence conflict" description="In Ref. 1; BAA04019." evidence="6" ref="1">
    <original>A</original>
    <variation>R</variation>
    <location>
        <position position="190"/>
    </location>
</feature>
<feature type="helix" evidence="11">
    <location>
        <begin position="10"/>
        <end position="18"/>
    </location>
</feature>
<feature type="strand" evidence="11">
    <location>
        <begin position="19"/>
        <end position="21"/>
    </location>
</feature>
<feature type="helix" evidence="11">
    <location>
        <begin position="24"/>
        <end position="37"/>
    </location>
</feature>
<feature type="strand" evidence="11">
    <location>
        <begin position="41"/>
        <end position="44"/>
    </location>
</feature>
<feature type="helix" evidence="11">
    <location>
        <begin position="45"/>
        <end position="53"/>
    </location>
</feature>
<feature type="helix" evidence="11">
    <location>
        <begin position="58"/>
        <end position="72"/>
    </location>
</feature>
<feature type="strand" evidence="11">
    <location>
        <begin position="77"/>
        <end position="81"/>
    </location>
</feature>
<feature type="helix" evidence="11">
    <location>
        <begin position="82"/>
        <end position="94"/>
    </location>
</feature>
<feature type="helix" evidence="11">
    <location>
        <begin position="97"/>
        <end position="108"/>
    </location>
</feature>
<feature type="strand" evidence="11">
    <location>
        <begin position="113"/>
        <end position="117"/>
    </location>
</feature>
<feature type="helix" evidence="11">
    <location>
        <begin position="118"/>
        <end position="132"/>
    </location>
</feature>
<feature type="turn" evidence="11">
    <location>
        <begin position="133"/>
        <end position="135"/>
    </location>
</feature>
<feature type="strand" evidence="11">
    <location>
        <begin position="140"/>
        <end position="142"/>
    </location>
</feature>
<feature type="helix" evidence="11">
    <location>
        <begin position="145"/>
        <end position="153"/>
    </location>
</feature>
<feature type="turn" evidence="11">
    <location>
        <begin position="154"/>
        <end position="156"/>
    </location>
</feature>
<feature type="strand" evidence="11">
    <location>
        <begin position="161"/>
        <end position="164"/>
    </location>
</feature>
<feature type="helix" evidence="11">
    <location>
        <begin position="166"/>
        <end position="173"/>
    </location>
</feature>
<feature type="helix" evidence="11">
    <location>
        <begin position="177"/>
        <end position="183"/>
    </location>
</feature>
<organism>
    <name type="scientific">Homo sapiens</name>
    <name type="common">Human</name>
    <dbReference type="NCBI Taxonomy" id="9606"/>
    <lineage>
        <taxon>Eukaryota</taxon>
        <taxon>Metazoa</taxon>
        <taxon>Chordata</taxon>
        <taxon>Craniata</taxon>
        <taxon>Vertebrata</taxon>
        <taxon>Euteleostomi</taxon>
        <taxon>Mammalia</taxon>
        <taxon>Eutheria</taxon>
        <taxon>Euarchontoglires</taxon>
        <taxon>Primates</taxon>
        <taxon>Haplorrhini</taxon>
        <taxon>Catarrhini</taxon>
        <taxon>Hominidae</taxon>
        <taxon>Homo</taxon>
    </lineage>
</organism>